<feature type="initiator methionine" description="Removed">
    <location>
        <position position="1"/>
    </location>
</feature>
<feature type="chain" id="PRO_0000054486" description="Alcohol dehydrogenase">
    <location>
        <begin position="2"/>
        <end position="256"/>
    </location>
</feature>
<feature type="active site" description="Proton acceptor" evidence="2">
    <location>
        <position position="153"/>
    </location>
</feature>
<feature type="binding site" evidence="1">
    <location>
        <begin position="12"/>
        <end position="35"/>
    </location>
    <ligand>
        <name>NAD(+)</name>
        <dbReference type="ChEBI" id="CHEBI:57540"/>
    </ligand>
</feature>
<feature type="binding site" evidence="1">
    <location>
        <position position="140"/>
    </location>
    <ligand>
        <name>substrate</name>
    </ligand>
</feature>
<proteinExistence type="inferred from homology"/>
<evidence type="ECO:0000250" key="1"/>
<evidence type="ECO:0000255" key="2">
    <source>
        <dbReference type="PROSITE-ProRule" id="PRU10001"/>
    </source>
</evidence>
<evidence type="ECO:0000305" key="3"/>
<organism>
    <name type="scientific">Drosophila orena</name>
    <name type="common">Fruit fly</name>
    <dbReference type="NCBI Taxonomy" id="7233"/>
    <lineage>
        <taxon>Eukaryota</taxon>
        <taxon>Metazoa</taxon>
        <taxon>Ecdysozoa</taxon>
        <taxon>Arthropoda</taxon>
        <taxon>Hexapoda</taxon>
        <taxon>Insecta</taxon>
        <taxon>Pterygota</taxon>
        <taxon>Neoptera</taxon>
        <taxon>Endopterygota</taxon>
        <taxon>Diptera</taxon>
        <taxon>Brachycera</taxon>
        <taxon>Muscomorpha</taxon>
        <taxon>Ephydroidea</taxon>
        <taxon>Drosophilidae</taxon>
        <taxon>Drosophila</taxon>
        <taxon>Sophophora</taxon>
    </lineage>
</organism>
<accession>P07159</accession>
<sequence>MAFTLTNKNVIFVAGLGGIGLDTSKELVKRDLKNLVILDRIENPAAIAELKAINPKVTVTFYPYDVTVPIAETTKLLKTIFAKLTTVDVLINGAGILDDYQIERTIAVNYTGLVNTTTAILDFWDKRKGGPGGIICNIGSVTGFNAIYQVPVYSGTKAAVVNFTSSLAKLAPITGVTAYTVNPGITRTTLVHKFNSWLDVEPQVAEKLLAHPIQSSLACAENFVKAIELNENGAIWKLDLGTLEAIKWSKHWDSGI</sequence>
<protein>
    <recommendedName>
        <fullName>Alcohol dehydrogenase</fullName>
        <ecNumber>1.1.1.1</ecNumber>
    </recommendedName>
</protein>
<reference key="1">
    <citation type="journal article" date="1984" name="Nature">
        <title>Conservation and change in the DNA sequences coding for alcohol dehydrogenase in sibling species of Drosophila.</title>
        <authorList>
            <person name="Bodmer M."/>
            <person name="Ashburner M."/>
        </authorList>
    </citation>
    <scope>NUCLEOTIDE SEQUENCE [GENOMIC DNA]</scope>
</reference>
<name>ADH_DROOR</name>
<keyword id="KW-0520">NAD</keyword>
<keyword id="KW-0560">Oxidoreductase</keyword>
<comment type="catalytic activity">
    <reaction evidence="2">
        <text>a primary alcohol + NAD(+) = an aldehyde + NADH + H(+)</text>
        <dbReference type="Rhea" id="RHEA:10736"/>
        <dbReference type="ChEBI" id="CHEBI:15378"/>
        <dbReference type="ChEBI" id="CHEBI:15734"/>
        <dbReference type="ChEBI" id="CHEBI:17478"/>
        <dbReference type="ChEBI" id="CHEBI:57540"/>
        <dbReference type="ChEBI" id="CHEBI:57945"/>
        <dbReference type="EC" id="1.1.1.1"/>
    </reaction>
</comment>
<comment type="catalytic activity">
    <reaction evidence="2">
        <text>a secondary alcohol + NAD(+) = a ketone + NADH + H(+)</text>
        <dbReference type="Rhea" id="RHEA:10740"/>
        <dbReference type="ChEBI" id="CHEBI:15378"/>
        <dbReference type="ChEBI" id="CHEBI:17087"/>
        <dbReference type="ChEBI" id="CHEBI:35681"/>
        <dbReference type="ChEBI" id="CHEBI:57540"/>
        <dbReference type="ChEBI" id="CHEBI:57945"/>
        <dbReference type="EC" id="1.1.1.1"/>
    </reaction>
</comment>
<comment type="subunit">
    <text>Homodimer.</text>
</comment>
<comment type="similarity">
    <text evidence="3">Belongs to the short-chain dehydrogenases/reductases (SDR) family.</text>
</comment>
<dbReference type="EC" id="1.1.1.1"/>
<dbReference type="EMBL" id="Z00032">
    <property type="protein sequence ID" value="CAA77332.1"/>
    <property type="molecule type" value="Genomic_DNA"/>
</dbReference>
<dbReference type="PIR" id="S09634">
    <property type="entry name" value="S09634"/>
</dbReference>
<dbReference type="SMR" id="P07159"/>
<dbReference type="FlyBase" id="FBgn0012616">
    <property type="gene designation" value="Dore\Adh"/>
</dbReference>
<dbReference type="GO" id="GO:0005829">
    <property type="term" value="C:cytosol"/>
    <property type="evidence" value="ECO:0007669"/>
    <property type="project" value="TreeGrafter"/>
</dbReference>
<dbReference type="GO" id="GO:0004022">
    <property type="term" value="F:alcohol dehydrogenase (NAD+) activity"/>
    <property type="evidence" value="ECO:0007669"/>
    <property type="project" value="UniProtKB-EC"/>
</dbReference>
<dbReference type="GO" id="GO:0006066">
    <property type="term" value="P:alcohol metabolic process"/>
    <property type="evidence" value="ECO:0007669"/>
    <property type="project" value="InterPro"/>
</dbReference>
<dbReference type="CDD" id="cd05323">
    <property type="entry name" value="ADH_SDR_c_like"/>
    <property type="match status" value="1"/>
</dbReference>
<dbReference type="FunFam" id="3.40.50.720:FF:000302">
    <property type="entry name" value="Alcohol dehydrogenase"/>
    <property type="match status" value="1"/>
</dbReference>
<dbReference type="Gene3D" id="3.40.50.720">
    <property type="entry name" value="NAD(P)-binding Rossmann-like Domain"/>
    <property type="match status" value="1"/>
</dbReference>
<dbReference type="InterPro" id="IPR002425">
    <property type="entry name" value="ADH_Drosophila-type"/>
</dbReference>
<dbReference type="InterPro" id="IPR036291">
    <property type="entry name" value="NAD(P)-bd_dom_sf"/>
</dbReference>
<dbReference type="InterPro" id="IPR020904">
    <property type="entry name" value="Sc_DH/Rdtase_CS"/>
</dbReference>
<dbReference type="InterPro" id="IPR002347">
    <property type="entry name" value="SDR_fam"/>
</dbReference>
<dbReference type="PANTHER" id="PTHR42901">
    <property type="entry name" value="ALCOHOL DEHYDROGENASE"/>
    <property type="match status" value="1"/>
</dbReference>
<dbReference type="PANTHER" id="PTHR42901:SF1">
    <property type="entry name" value="ALCOHOL DEHYDROGENASE"/>
    <property type="match status" value="1"/>
</dbReference>
<dbReference type="Pfam" id="PF00106">
    <property type="entry name" value="adh_short"/>
    <property type="match status" value="1"/>
</dbReference>
<dbReference type="PRINTS" id="PR01168">
    <property type="entry name" value="ALCDHDRGNASE"/>
</dbReference>
<dbReference type="PRINTS" id="PR01167">
    <property type="entry name" value="INSADHFAMILY"/>
</dbReference>
<dbReference type="PRINTS" id="PR00080">
    <property type="entry name" value="SDRFAMILY"/>
</dbReference>
<dbReference type="SUPFAM" id="SSF51735">
    <property type="entry name" value="NAD(P)-binding Rossmann-fold domains"/>
    <property type="match status" value="1"/>
</dbReference>
<dbReference type="PROSITE" id="PS00061">
    <property type="entry name" value="ADH_SHORT"/>
    <property type="match status" value="1"/>
</dbReference>
<gene>
    <name type="primary">Adh</name>
</gene>